<accession>Q0I203</accession>
<feature type="chain" id="PRO_0000319176" description="Formate-dependent phosphoribosylglycinamide formyltransferase">
    <location>
        <begin position="1"/>
        <end position="393"/>
    </location>
</feature>
<feature type="domain" description="ATP-grasp" evidence="1">
    <location>
        <begin position="119"/>
        <end position="308"/>
    </location>
</feature>
<feature type="binding site" evidence="1">
    <location>
        <begin position="22"/>
        <end position="23"/>
    </location>
    <ligand>
        <name>N(1)-(5-phospho-beta-D-ribosyl)glycinamide</name>
        <dbReference type="ChEBI" id="CHEBI:143788"/>
    </ligand>
</feature>
<feature type="binding site" evidence="1">
    <location>
        <position position="82"/>
    </location>
    <ligand>
        <name>N(1)-(5-phospho-beta-D-ribosyl)glycinamide</name>
        <dbReference type="ChEBI" id="CHEBI:143788"/>
    </ligand>
</feature>
<feature type="binding site" evidence="1">
    <location>
        <position position="114"/>
    </location>
    <ligand>
        <name>ATP</name>
        <dbReference type="ChEBI" id="CHEBI:30616"/>
    </ligand>
</feature>
<feature type="binding site" evidence="1">
    <location>
        <position position="155"/>
    </location>
    <ligand>
        <name>ATP</name>
        <dbReference type="ChEBI" id="CHEBI:30616"/>
    </ligand>
</feature>
<feature type="binding site" evidence="1">
    <location>
        <begin position="160"/>
        <end position="165"/>
    </location>
    <ligand>
        <name>ATP</name>
        <dbReference type="ChEBI" id="CHEBI:30616"/>
    </ligand>
</feature>
<feature type="binding site" evidence="1">
    <location>
        <begin position="195"/>
        <end position="198"/>
    </location>
    <ligand>
        <name>ATP</name>
        <dbReference type="ChEBI" id="CHEBI:30616"/>
    </ligand>
</feature>
<feature type="binding site" evidence="1">
    <location>
        <position position="203"/>
    </location>
    <ligand>
        <name>ATP</name>
        <dbReference type="ChEBI" id="CHEBI:30616"/>
    </ligand>
</feature>
<feature type="binding site" evidence="1">
    <location>
        <position position="267"/>
    </location>
    <ligand>
        <name>Mg(2+)</name>
        <dbReference type="ChEBI" id="CHEBI:18420"/>
    </ligand>
</feature>
<feature type="binding site" evidence="1">
    <location>
        <position position="279"/>
    </location>
    <ligand>
        <name>Mg(2+)</name>
        <dbReference type="ChEBI" id="CHEBI:18420"/>
    </ligand>
</feature>
<feature type="binding site" evidence="1">
    <location>
        <position position="286"/>
    </location>
    <ligand>
        <name>N(1)-(5-phospho-beta-D-ribosyl)glycinamide</name>
        <dbReference type="ChEBI" id="CHEBI:143788"/>
    </ligand>
</feature>
<feature type="binding site" evidence="1">
    <location>
        <position position="356"/>
    </location>
    <ligand>
        <name>N(1)-(5-phospho-beta-D-ribosyl)glycinamide</name>
        <dbReference type="ChEBI" id="CHEBI:143788"/>
    </ligand>
</feature>
<feature type="binding site" evidence="1">
    <location>
        <begin position="363"/>
        <end position="364"/>
    </location>
    <ligand>
        <name>N(1)-(5-phospho-beta-D-ribosyl)glycinamide</name>
        <dbReference type="ChEBI" id="CHEBI:143788"/>
    </ligand>
</feature>
<protein>
    <recommendedName>
        <fullName evidence="1">Formate-dependent phosphoribosylglycinamide formyltransferase</fullName>
        <ecNumber evidence="1">6.3.1.21</ecNumber>
    </recommendedName>
    <alternativeName>
        <fullName evidence="1">5'-phosphoribosylglycinamide transformylase 2</fullName>
    </alternativeName>
    <alternativeName>
        <fullName evidence="1">Formate-dependent GAR transformylase</fullName>
    </alternativeName>
    <alternativeName>
        <fullName evidence="1">GAR transformylase 2</fullName>
        <shortName evidence="1">GART 2</shortName>
    </alternativeName>
    <alternativeName>
        <fullName evidence="1">Non-folate glycinamide ribonucleotide transformylase</fullName>
    </alternativeName>
    <alternativeName>
        <fullName evidence="1">Phosphoribosylglycinamide formyltransferase 2</fullName>
    </alternativeName>
</protein>
<reference key="1">
    <citation type="journal article" date="2007" name="J. Bacteriol.">
        <title>Complete genome sequence of Haemophilus somnus (Histophilus somni) strain 129Pt and comparison to Haemophilus ducreyi 35000HP and Haemophilus influenzae Rd.</title>
        <authorList>
            <person name="Challacombe J.F."/>
            <person name="Duncan A.J."/>
            <person name="Brettin T.S."/>
            <person name="Bruce D."/>
            <person name="Chertkov O."/>
            <person name="Detter J.C."/>
            <person name="Han C.S."/>
            <person name="Misra M."/>
            <person name="Richardson P."/>
            <person name="Tapia R."/>
            <person name="Thayer N."/>
            <person name="Xie G."/>
            <person name="Inzana T.J."/>
        </authorList>
    </citation>
    <scope>NUCLEOTIDE SEQUENCE [LARGE SCALE GENOMIC DNA]</scope>
    <source>
        <strain>129Pt</strain>
    </source>
</reference>
<keyword id="KW-0067">ATP-binding</keyword>
<keyword id="KW-0436">Ligase</keyword>
<keyword id="KW-0460">Magnesium</keyword>
<keyword id="KW-0479">Metal-binding</keyword>
<keyword id="KW-0547">Nucleotide-binding</keyword>
<keyword id="KW-0658">Purine biosynthesis</keyword>
<evidence type="ECO:0000255" key="1">
    <source>
        <dbReference type="HAMAP-Rule" id="MF_01643"/>
    </source>
</evidence>
<sequence length="393" mass="43029">MTILGTALTPKATKVMLLGSGELGKEVVIELQRLGVEVIAVDRYENAPAQQVAHRSYTISMLDGNALKALIEKEKPDYIVPEVEAIATSTLVELEQAGFNVVPTAKATQLTMNREGIRRLAAEKLKLPTSNYQFVDNFDDFQSAVENLGIPCVIKPIMSSSGHGQSILKSKDDLQKAWDYAQQGGRAGAGRVIVEGFVKFDYEITLLTVRHAEGTSFLAPIGHRQEKGDYRESWQPQAMSVQALAKAQHIAEKITTELGGRGIFGVEMFVCGDEVIFNEVSPRPHDTGMVTLISQELSEFALHARAILGLPIPEINLISPAASKAIVVEGKSNQVQFGNLFEVLQEPNTNIRLFGKGEVNGHRRLGVILARDISVDKALEKVSRAYDKLDIQL</sequence>
<organism>
    <name type="scientific">Histophilus somni (strain 129Pt)</name>
    <name type="common">Haemophilus somnus</name>
    <dbReference type="NCBI Taxonomy" id="205914"/>
    <lineage>
        <taxon>Bacteria</taxon>
        <taxon>Pseudomonadati</taxon>
        <taxon>Pseudomonadota</taxon>
        <taxon>Gammaproteobacteria</taxon>
        <taxon>Pasteurellales</taxon>
        <taxon>Pasteurellaceae</taxon>
        <taxon>Histophilus</taxon>
    </lineage>
</organism>
<gene>
    <name evidence="1" type="primary">purT</name>
    <name type="ordered locus">HS_0549</name>
</gene>
<dbReference type="EC" id="6.3.1.21" evidence="1"/>
<dbReference type="EMBL" id="CP000436">
    <property type="protein sequence ID" value="ABI24826.1"/>
    <property type="molecule type" value="Genomic_DNA"/>
</dbReference>
<dbReference type="SMR" id="Q0I203"/>
<dbReference type="KEGG" id="hso:HS_0549"/>
<dbReference type="eggNOG" id="COG0027">
    <property type="taxonomic scope" value="Bacteria"/>
</dbReference>
<dbReference type="HOGENOM" id="CLU_011534_1_3_6"/>
<dbReference type="UniPathway" id="UPA00074">
    <property type="reaction ID" value="UER00127"/>
</dbReference>
<dbReference type="GO" id="GO:0005829">
    <property type="term" value="C:cytosol"/>
    <property type="evidence" value="ECO:0007669"/>
    <property type="project" value="TreeGrafter"/>
</dbReference>
<dbReference type="GO" id="GO:0005524">
    <property type="term" value="F:ATP binding"/>
    <property type="evidence" value="ECO:0007669"/>
    <property type="project" value="UniProtKB-UniRule"/>
</dbReference>
<dbReference type="GO" id="GO:0000287">
    <property type="term" value="F:magnesium ion binding"/>
    <property type="evidence" value="ECO:0007669"/>
    <property type="project" value="InterPro"/>
</dbReference>
<dbReference type="GO" id="GO:0043815">
    <property type="term" value="F:phosphoribosylglycinamide formyltransferase 2 activity"/>
    <property type="evidence" value="ECO:0007669"/>
    <property type="project" value="UniProtKB-UniRule"/>
</dbReference>
<dbReference type="GO" id="GO:0004644">
    <property type="term" value="F:phosphoribosylglycinamide formyltransferase activity"/>
    <property type="evidence" value="ECO:0007669"/>
    <property type="project" value="InterPro"/>
</dbReference>
<dbReference type="GO" id="GO:0006189">
    <property type="term" value="P:'de novo' IMP biosynthetic process"/>
    <property type="evidence" value="ECO:0007669"/>
    <property type="project" value="UniProtKB-UniRule"/>
</dbReference>
<dbReference type="FunFam" id="3.30.1490.20:FF:000013">
    <property type="entry name" value="Formate-dependent phosphoribosylglycinamide formyltransferase"/>
    <property type="match status" value="1"/>
</dbReference>
<dbReference type="FunFam" id="3.30.470.20:FF:000027">
    <property type="entry name" value="Formate-dependent phosphoribosylglycinamide formyltransferase"/>
    <property type="match status" value="1"/>
</dbReference>
<dbReference type="FunFam" id="3.40.50.20:FF:000007">
    <property type="entry name" value="Formate-dependent phosphoribosylglycinamide formyltransferase"/>
    <property type="match status" value="1"/>
</dbReference>
<dbReference type="Gene3D" id="3.40.50.20">
    <property type="match status" value="1"/>
</dbReference>
<dbReference type="Gene3D" id="3.30.1490.20">
    <property type="entry name" value="ATP-grasp fold, A domain"/>
    <property type="match status" value="1"/>
</dbReference>
<dbReference type="Gene3D" id="3.30.470.20">
    <property type="entry name" value="ATP-grasp fold, B domain"/>
    <property type="match status" value="1"/>
</dbReference>
<dbReference type="HAMAP" id="MF_01643">
    <property type="entry name" value="PurT"/>
    <property type="match status" value="1"/>
</dbReference>
<dbReference type="InterPro" id="IPR011761">
    <property type="entry name" value="ATP-grasp"/>
</dbReference>
<dbReference type="InterPro" id="IPR003135">
    <property type="entry name" value="ATP-grasp_carboxylate-amine"/>
</dbReference>
<dbReference type="InterPro" id="IPR013815">
    <property type="entry name" value="ATP_grasp_subdomain_1"/>
</dbReference>
<dbReference type="InterPro" id="IPR016185">
    <property type="entry name" value="PreATP-grasp_dom_sf"/>
</dbReference>
<dbReference type="InterPro" id="IPR005862">
    <property type="entry name" value="PurT"/>
</dbReference>
<dbReference type="InterPro" id="IPR054350">
    <property type="entry name" value="PurT/PurK_preATP-grasp"/>
</dbReference>
<dbReference type="InterPro" id="IPR048740">
    <property type="entry name" value="PurT_C"/>
</dbReference>
<dbReference type="InterPro" id="IPR011054">
    <property type="entry name" value="Rudment_hybrid_motif"/>
</dbReference>
<dbReference type="NCBIfam" id="NF006766">
    <property type="entry name" value="PRK09288.1"/>
    <property type="match status" value="1"/>
</dbReference>
<dbReference type="NCBIfam" id="TIGR01142">
    <property type="entry name" value="purT"/>
    <property type="match status" value="1"/>
</dbReference>
<dbReference type="PANTHER" id="PTHR43055">
    <property type="entry name" value="FORMATE-DEPENDENT PHOSPHORIBOSYLGLYCINAMIDE FORMYLTRANSFERASE"/>
    <property type="match status" value="1"/>
</dbReference>
<dbReference type="PANTHER" id="PTHR43055:SF1">
    <property type="entry name" value="FORMATE-DEPENDENT PHOSPHORIBOSYLGLYCINAMIDE FORMYLTRANSFERASE"/>
    <property type="match status" value="1"/>
</dbReference>
<dbReference type="Pfam" id="PF02222">
    <property type="entry name" value="ATP-grasp"/>
    <property type="match status" value="1"/>
</dbReference>
<dbReference type="Pfam" id="PF21244">
    <property type="entry name" value="PurT_C"/>
    <property type="match status" value="1"/>
</dbReference>
<dbReference type="Pfam" id="PF22660">
    <property type="entry name" value="RS_preATP-grasp-like"/>
    <property type="match status" value="1"/>
</dbReference>
<dbReference type="SUPFAM" id="SSF56059">
    <property type="entry name" value="Glutathione synthetase ATP-binding domain-like"/>
    <property type="match status" value="1"/>
</dbReference>
<dbReference type="SUPFAM" id="SSF52440">
    <property type="entry name" value="PreATP-grasp domain"/>
    <property type="match status" value="1"/>
</dbReference>
<dbReference type="SUPFAM" id="SSF51246">
    <property type="entry name" value="Rudiment single hybrid motif"/>
    <property type="match status" value="1"/>
</dbReference>
<dbReference type="PROSITE" id="PS50975">
    <property type="entry name" value="ATP_GRASP"/>
    <property type="match status" value="1"/>
</dbReference>
<proteinExistence type="inferred from homology"/>
<comment type="function">
    <text evidence="1">Involved in the de novo purine biosynthesis. Catalyzes the transfer of formate to 5-phospho-ribosyl-glycinamide (GAR), producing 5-phospho-ribosyl-N-formylglycinamide (FGAR). Formate is provided by PurU via hydrolysis of 10-formyl-tetrahydrofolate.</text>
</comment>
<comment type="catalytic activity">
    <reaction evidence="1">
        <text>N(1)-(5-phospho-beta-D-ribosyl)glycinamide + formate + ATP = N(2)-formyl-N(1)-(5-phospho-beta-D-ribosyl)glycinamide + ADP + phosphate + H(+)</text>
        <dbReference type="Rhea" id="RHEA:24829"/>
        <dbReference type="ChEBI" id="CHEBI:15378"/>
        <dbReference type="ChEBI" id="CHEBI:15740"/>
        <dbReference type="ChEBI" id="CHEBI:30616"/>
        <dbReference type="ChEBI" id="CHEBI:43474"/>
        <dbReference type="ChEBI" id="CHEBI:143788"/>
        <dbReference type="ChEBI" id="CHEBI:147286"/>
        <dbReference type="ChEBI" id="CHEBI:456216"/>
        <dbReference type="EC" id="6.3.1.21"/>
    </reaction>
    <physiologicalReaction direction="left-to-right" evidence="1">
        <dbReference type="Rhea" id="RHEA:24830"/>
    </physiologicalReaction>
</comment>
<comment type="pathway">
    <text evidence="1">Purine metabolism; IMP biosynthesis via de novo pathway; N(2)-formyl-N(1)-(5-phospho-D-ribosyl)glycinamide from N(1)-(5-phospho-D-ribosyl)glycinamide (formate route): step 1/1.</text>
</comment>
<comment type="subunit">
    <text evidence="1">Homodimer.</text>
</comment>
<comment type="similarity">
    <text evidence="1">Belongs to the PurK/PurT family.</text>
</comment>
<name>PURT_HISS1</name>